<sequence>MAELTHLDERGQARMVDVAEKPETHRVAVARGRVSLRPETLQLVREGRAAKGDVLAVARVAGIMAAKRTAELIPLCHPLPLTKVEVDVRTNEQDTCLEIEARVETVSRTGVEMEALTAVAVAALTVYDMLKAVDRGMTIDRIQLIEKAGGRSGTWRREDDEARHAR</sequence>
<protein>
    <recommendedName>
        <fullName evidence="1">Cyclic pyranopterin monophosphate synthase</fullName>
        <ecNumber evidence="1">4.6.1.17</ecNumber>
    </recommendedName>
    <alternativeName>
        <fullName evidence="1">Molybdenum cofactor biosynthesis protein C</fullName>
    </alternativeName>
</protein>
<gene>
    <name evidence="1" type="primary">moaC</name>
    <name type="ordered locus">trd_1078</name>
</gene>
<accession>B9L0K8</accession>
<dbReference type="EC" id="4.6.1.17" evidence="1"/>
<dbReference type="EMBL" id="CP001275">
    <property type="protein sequence ID" value="ACM05935.1"/>
    <property type="molecule type" value="Genomic_DNA"/>
</dbReference>
<dbReference type="RefSeq" id="WP_015922032.1">
    <property type="nucleotide sequence ID" value="NC_011959.1"/>
</dbReference>
<dbReference type="SMR" id="B9L0K8"/>
<dbReference type="STRING" id="309801.trd_1078"/>
<dbReference type="KEGG" id="tro:trd_1078"/>
<dbReference type="eggNOG" id="COG0315">
    <property type="taxonomic scope" value="Bacteria"/>
</dbReference>
<dbReference type="HOGENOM" id="CLU_074693_1_0_0"/>
<dbReference type="OrthoDB" id="9794429at2"/>
<dbReference type="UniPathway" id="UPA00344"/>
<dbReference type="Proteomes" id="UP000000447">
    <property type="component" value="Chromosome"/>
</dbReference>
<dbReference type="GO" id="GO:0061799">
    <property type="term" value="F:cyclic pyranopterin monophosphate synthase activity"/>
    <property type="evidence" value="ECO:0007669"/>
    <property type="project" value="UniProtKB-UniRule"/>
</dbReference>
<dbReference type="GO" id="GO:0006777">
    <property type="term" value="P:Mo-molybdopterin cofactor biosynthetic process"/>
    <property type="evidence" value="ECO:0007669"/>
    <property type="project" value="UniProtKB-UniRule"/>
</dbReference>
<dbReference type="CDD" id="cd01420">
    <property type="entry name" value="MoaC_PE"/>
    <property type="match status" value="1"/>
</dbReference>
<dbReference type="FunFam" id="3.30.70.640:FF:000001">
    <property type="entry name" value="Cyclic pyranopterin monophosphate synthase"/>
    <property type="match status" value="1"/>
</dbReference>
<dbReference type="Gene3D" id="3.30.70.640">
    <property type="entry name" value="Molybdopterin cofactor biosynthesis C (MoaC) domain"/>
    <property type="match status" value="1"/>
</dbReference>
<dbReference type="HAMAP" id="MF_01224_B">
    <property type="entry name" value="MoaC_B"/>
    <property type="match status" value="1"/>
</dbReference>
<dbReference type="InterPro" id="IPR023045">
    <property type="entry name" value="MoaC"/>
</dbReference>
<dbReference type="InterPro" id="IPR047594">
    <property type="entry name" value="MoaC_bact/euk"/>
</dbReference>
<dbReference type="InterPro" id="IPR036522">
    <property type="entry name" value="MoaC_sf"/>
</dbReference>
<dbReference type="InterPro" id="IPR050105">
    <property type="entry name" value="MoCo_biosynth_MoaA/MoaC"/>
</dbReference>
<dbReference type="InterPro" id="IPR002820">
    <property type="entry name" value="Mopterin_CF_biosynth-C_dom"/>
</dbReference>
<dbReference type="NCBIfam" id="TIGR00581">
    <property type="entry name" value="moaC"/>
    <property type="match status" value="1"/>
</dbReference>
<dbReference type="NCBIfam" id="NF006870">
    <property type="entry name" value="PRK09364.1"/>
    <property type="match status" value="1"/>
</dbReference>
<dbReference type="PANTHER" id="PTHR22960:SF29">
    <property type="entry name" value="CYCLIC PYRANOPTERIN MONOPHOSPHATE SYNTHASE"/>
    <property type="match status" value="1"/>
</dbReference>
<dbReference type="PANTHER" id="PTHR22960">
    <property type="entry name" value="MOLYBDOPTERIN COFACTOR SYNTHESIS PROTEIN A"/>
    <property type="match status" value="1"/>
</dbReference>
<dbReference type="Pfam" id="PF01967">
    <property type="entry name" value="MoaC"/>
    <property type="match status" value="1"/>
</dbReference>
<dbReference type="SUPFAM" id="SSF55040">
    <property type="entry name" value="Molybdenum cofactor biosynthesis protein C, MoaC"/>
    <property type="match status" value="1"/>
</dbReference>
<feature type="chain" id="PRO_1000164903" description="Cyclic pyranopterin monophosphate synthase">
    <location>
        <begin position="1"/>
        <end position="166"/>
    </location>
</feature>
<feature type="active site" evidence="1">
    <location>
        <position position="128"/>
    </location>
</feature>
<feature type="binding site" evidence="1">
    <location>
        <begin position="75"/>
        <end position="77"/>
    </location>
    <ligand>
        <name>substrate</name>
    </ligand>
</feature>
<feature type="binding site" evidence="1">
    <location>
        <begin position="113"/>
        <end position="114"/>
    </location>
    <ligand>
        <name>substrate</name>
    </ligand>
</feature>
<reference key="1">
    <citation type="journal article" date="2009" name="PLoS ONE">
        <title>Complete genome sequence of the aerobic CO-oxidizing thermophile Thermomicrobium roseum.</title>
        <authorList>
            <person name="Wu D."/>
            <person name="Raymond J."/>
            <person name="Wu M."/>
            <person name="Chatterji S."/>
            <person name="Ren Q."/>
            <person name="Graham J.E."/>
            <person name="Bryant D.A."/>
            <person name="Robb F."/>
            <person name="Colman A."/>
            <person name="Tallon L.J."/>
            <person name="Badger J.H."/>
            <person name="Madupu R."/>
            <person name="Ward N.L."/>
            <person name="Eisen J.A."/>
        </authorList>
    </citation>
    <scope>NUCLEOTIDE SEQUENCE [LARGE SCALE GENOMIC DNA]</scope>
    <source>
        <strain>ATCC 27502 / DSM 5159 / P-2</strain>
    </source>
</reference>
<name>MOAC_THERP</name>
<comment type="function">
    <text evidence="1">Catalyzes the conversion of (8S)-3',8-cyclo-7,8-dihydroguanosine 5'-triphosphate to cyclic pyranopterin monophosphate (cPMP).</text>
</comment>
<comment type="catalytic activity">
    <reaction evidence="1">
        <text>(8S)-3',8-cyclo-7,8-dihydroguanosine 5'-triphosphate = cyclic pyranopterin phosphate + diphosphate</text>
        <dbReference type="Rhea" id="RHEA:49580"/>
        <dbReference type="ChEBI" id="CHEBI:33019"/>
        <dbReference type="ChEBI" id="CHEBI:59648"/>
        <dbReference type="ChEBI" id="CHEBI:131766"/>
        <dbReference type="EC" id="4.6.1.17"/>
    </reaction>
</comment>
<comment type="pathway">
    <text evidence="1">Cofactor biosynthesis; molybdopterin biosynthesis.</text>
</comment>
<comment type="subunit">
    <text evidence="1">Homohexamer; trimer of dimers.</text>
</comment>
<comment type="similarity">
    <text evidence="1">Belongs to the MoaC family.</text>
</comment>
<evidence type="ECO:0000255" key="1">
    <source>
        <dbReference type="HAMAP-Rule" id="MF_01224"/>
    </source>
</evidence>
<proteinExistence type="inferred from homology"/>
<organism>
    <name type="scientific">Thermomicrobium roseum (strain ATCC 27502 / DSM 5159 / P-2)</name>
    <dbReference type="NCBI Taxonomy" id="309801"/>
    <lineage>
        <taxon>Bacteria</taxon>
        <taxon>Pseudomonadati</taxon>
        <taxon>Thermomicrobiota</taxon>
        <taxon>Thermomicrobia</taxon>
        <taxon>Thermomicrobiales</taxon>
        <taxon>Thermomicrobiaceae</taxon>
        <taxon>Thermomicrobium</taxon>
    </lineage>
</organism>
<keyword id="KW-0456">Lyase</keyword>
<keyword id="KW-0501">Molybdenum cofactor biosynthesis</keyword>
<keyword id="KW-1185">Reference proteome</keyword>